<gene>
    <name evidence="1" type="primary">cbiT</name>
    <name type="ordered locus">MTH_146</name>
</gene>
<keyword id="KW-0002">3D-structure</keyword>
<keyword id="KW-0169">Cobalamin biosynthesis</keyword>
<keyword id="KW-0489">Methyltransferase</keyword>
<keyword id="KW-1185">Reference proteome</keyword>
<keyword id="KW-0949">S-adenosyl-L-methionine</keyword>
<keyword id="KW-0808">Transferase</keyword>
<protein>
    <recommendedName>
        <fullName evidence="1">Probable cobalt-precorrin-6B C(15)-methyltransferase (decarboxylating)</fullName>
        <ecNumber evidence="1">2.1.1.196</ecNumber>
    </recommendedName>
</protein>
<dbReference type="EC" id="2.1.1.196" evidence="1"/>
<dbReference type="EMBL" id="AE000666">
    <property type="protein sequence ID" value="AAB84652.1"/>
    <property type="molecule type" value="Genomic_DNA"/>
</dbReference>
<dbReference type="PIR" id="D69061">
    <property type="entry name" value="D69061"/>
</dbReference>
<dbReference type="RefSeq" id="WP_010875785.1">
    <property type="nucleotide sequence ID" value="NC_000916.1"/>
</dbReference>
<dbReference type="PDB" id="1F38">
    <property type="method" value="X-ray"/>
    <property type="resolution" value="2.40 A"/>
    <property type="chains" value="A/B/C/D=1-192"/>
</dbReference>
<dbReference type="PDB" id="1KXZ">
    <property type="method" value="X-ray"/>
    <property type="resolution" value="2.70 A"/>
    <property type="chains" value="A/B/C/D/E/F/G/H=1-192"/>
</dbReference>
<dbReference type="PDB" id="1L3B">
    <property type="method" value="X-ray"/>
    <property type="resolution" value="2.65 A"/>
    <property type="chains" value="A/B/C/D/E/F/G/H=1-192"/>
</dbReference>
<dbReference type="PDB" id="1L3C">
    <property type="method" value="X-ray"/>
    <property type="resolution" value="2.31 A"/>
    <property type="chains" value="A/B/C/D=1-192"/>
</dbReference>
<dbReference type="PDB" id="1L3I">
    <property type="method" value="X-ray"/>
    <property type="resolution" value="1.95 A"/>
    <property type="chains" value="A/B/C/D/E/F=1-192"/>
</dbReference>
<dbReference type="PDBsum" id="1F38"/>
<dbReference type="PDBsum" id="1KXZ"/>
<dbReference type="PDBsum" id="1L3B"/>
<dbReference type="PDBsum" id="1L3C"/>
<dbReference type="PDBsum" id="1L3I"/>
<dbReference type="SMR" id="O26249"/>
<dbReference type="FunCoup" id="O26249">
    <property type="interactions" value="90"/>
</dbReference>
<dbReference type="STRING" id="187420.MTH_146"/>
<dbReference type="PaxDb" id="187420-MTH_146"/>
<dbReference type="EnsemblBacteria" id="AAB84652">
    <property type="protein sequence ID" value="AAB84652"/>
    <property type="gene ID" value="MTH_146"/>
</dbReference>
<dbReference type="GeneID" id="1470107"/>
<dbReference type="GeneID" id="77400705"/>
<dbReference type="KEGG" id="mth:MTH_146"/>
<dbReference type="HOGENOM" id="CLU_094143_0_0_2"/>
<dbReference type="InParanoid" id="O26249"/>
<dbReference type="BRENDA" id="2.1.1.196">
    <property type="organism ID" value="3256"/>
</dbReference>
<dbReference type="UniPathway" id="UPA00148">
    <property type="reaction ID" value="UER00229"/>
</dbReference>
<dbReference type="EvolutionaryTrace" id="O26249"/>
<dbReference type="Proteomes" id="UP000005223">
    <property type="component" value="Chromosome"/>
</dbReference>
<dbReference type="GO" id="GO:0043776">
    <property type="term" value="F:cobalt-precorrin-6B C5-methyltransferase activity"/>
    <property type="evidence" value="ECO:0007669"/>
    <property type="project" value="RHEA"/>
</dbReference>
<dbReference type="GO" id="GO:0008276">
    <property type="term" value="F:protein methyltransferase activity"/>
    <property type="evidence" value="ECO:0007669"/>
    <property type="project" value="InterPro"/>
</dbReference>
<dbReference type="GO" id="GO:0019251">
    <property type="term" value="P:anaerobic cobalamin biosynthetic process"/>
    <property type="evidence" value="ECO:0007669"/>
    <property type="project" value="UniProtKB-UniRule"/>
</dbReference>
<dbReference type="GO" id="GO:0032259">
    <property type="term" value="P:methylation"/>
    <property type="evidence" value="ECO:0007669"/>
    <property type="project" value="UniProtKB-KW"/>
</dbReference>
<dbReference type="CDD" id="cd02440">
    <property type="entry name" value="AdoMet_MTases"/>
    <property type="match status" value="1"/>
</dbReference>
<dbReference type="Gene3D" id="3.40.50.150">
    <property type="entry name" value="Vaccinia Virus protein VP39"/>
    <property type="match status" value="1"/>
</dbReference>
<dbReference type="HAMAP" id="MF_00786">
    <property type="entry name" value="CbiT"/>
    <property type="match status" value="1"/>
</dbReference>
<dbReference type="InterPro" id="IPR023475">
    <property type="entry name" value="CbiT"/>
</dbReference>
<dbReference type="InterPro" id="IPR014008">
    <property type="entry name" value="Cbl_synth_MTase_CbiT"/>
</dbReference>
<dbReference type="InterPro" id="IPR050714">
    <property type="entry name" value="Cobalamin_biosynth_MTase"/>
</dbReference>
<dbReference type="InterPro" id="IPR025714">
    <property type="entry name" value="Methyltranfer_dom"/>
</dbReference>
<dbReference type="InterPro" id="IPR029063">
    <property type="entry name" value="SAM-dependent_MTases_sf"/>
</dbReference>
<dbReference type="NCBIfam" id="TIGR02469">
    <property type="entry name" value="CbiT"/>
    <property type="match status" value="1"/>
</dbReference>
<dbReference type="PANTHER" id="PTHR43182">
    <property type="entry name" value="COBALT-PRECORRIN-6B C(15)-METHYLTRANSFERASE (DECARBOXYLATING)"/>
    <property type="match status" value="1"/>
</dbReference>
<dbReference type="PANTHER" id="PTHR43182:SF1">
    <property type="entry name" value="COBALT-PRECORRIN-7 C(5)-METHYLTRANSFERASE"/>
    <property type="match status" value="1"/>
</dbReference>
<dbReference type="Pfam" id="PF13847">
    <property type="entry name" value="Methyltransf_31"/>
    <property type="match status" value="1"/>
</dbReference>
<dbReference type="SUPFAM" id="SSF53335">
    <property type="entry name" value="S-adenosyl-L-methionine-dependent methyltransferases"/>
    <property type="match status" value="1"/>
</dbReference>
<sequence length="192" mass="20714">MIPDDEFIKNPSVPGPTAMEVRCLIMCLAEPGKNDVAVDVGCGTGGVTLELAGRVRRVYAIDRNPEAISTTEMNLQRHGLGDNVTLMEGDAPEALCKIPDIDIAVVGGSGGELQEILRIIKDKLKPGGRIIVTAILLETKFEAMECLRDLGFDVNITELNIARGRALDRGTMMVSRNPVALIYTGVSHENKD</sequence>
<name>CBIT_METTH</name>
<reference key="1">
    <citation type="journal article" date="1997" name="J. Bacteriol.">
        <title>Complete genome sequence of Methanobacterium thermoautotrophicum deltaH: functional analysis and comparative genomics.</title>
        <authorList>
            <person name="Smith D.R."/>
            <person name="Doucette-Stamm L.A."/>
            <person name="Deloughery C."/>
            <person name="Lee H.-M."/>
            <person name="Dubois J."/>
            <person name="Aldredge T."/>
            <person name="Bashirzadeh R."/>
            <person name="Blakely D."/>
            <person name="Cook R."/>
            <person name="Gilbert K."/>
            <person name="Harrison D."/>
            <person name="Hoang L."/>
            <person name="Keagle P."/>
            <person name="Lumm W."/>
            <person name="Pothier B."/>
            <person name="Qiu D."/>
            <person name="Spadafora R."/>
            <person name="Vicare R."/>
            <person name="Wang Y."/>
            <person name="Wierzbowski J."/>
            <person name="Gibson R."/>
            <person name="Jiwani N."/>
            <person name="Caruso A."/>
            <person name="Bush D."/>
            <person name="Safer H."/>
            <person name="Patwell D."/>
            <person name="Prabhakar S."/>
            <person name="McDougall S."/>
            <person name="Shimer G."/>
            <person name="Goyal A."/>
            <person name="Pietrovski S."/>
            <person name="Church G.M."/>
            <person name="Daniels C.J."/>
            <person name="Mao J.-I."/>
            <person name="Rice P."/>
            <person name="Noelling J."/>
            <person name="Reeve J.N."/>
        </authorList>
    </citation>
    <scope>NUCLEOTIDE SEQUENCE [LARGE SCALE GENOMIC DNA]</scope>
    <source>
        <strain>ATCC 29096 / DSM 1053 / JCM 10044 / NBRC 100330 / Delta H</strain>
    </source>
</reference>
<reference key="2">
    <citation type="journal article" date="2002" name="Structure">
        <title>The crystal structure of MT0146/CbiT suggests that the putative precorrin-8w decarboxylase is a methyltransferase.</title>
        <authorList>
            <person name="Keller J.P."/>
            <person name="Smith P.M."/>
            <person name="Benach J."/>
            <person name="Christendat D."/>
            <person name="deTitta G.T."/>
            <person name="Hunt J.F."/>
        </authorList>
    </citation>
    <scope>X-RAY CRYSTALLOGRAPHY (1.95 ANGSTROMS) IN COMPLEX WITH S-ADENOSYL-L-METHIONINE</scope>
    <scope>SUBUNIT</scope>
    <scope>FUNCTION</scope>
</reference>
<organism>
    <name type="scientific">Methanothermobacter thermautotrophicus (strain ATCC 29096 / DSM 1053 / JCM 10044 / NBRC 100330 / Delta H)</name>
    <name type="common">Methanobacterium thermoautotrophicum</name>
    <dbReference type="NCBI Taxonomy" id="187420"/>
    <lineage>
        <taxon>Archaea</taxon>
        <taxon>Methanobacteriati</taxon>
        <taxon>Methanobacteriota</taxon>
        <taxon>Methanomada group</taxon>
        <taxon>Methanobacteria</taxon>
        <taxon>Methanobacteriales</taxon>
        <taxon>Methanobacteriaceae</taxon>
        <taxon>Methanothermobacter</taxon>
    </lineage>
</organism>
<comment type="function">
    <text evidence="4">Catalyzes the methylation of C-15 in cobalt-precorrin-6B followed by the decarboxylation of C-12 to form cobalt-precorrin-7.</text>
</comment>
<comment type="catalytic activity">
    <reaction evidence="1">
        <text>Co-precorrin-6B + S-adenosyl-L-methionine = Co-precorrin-7 + S-adenosyl-L-homocysteine + CO2</text>
        <dbReference type="Rhea" id="RHEA:36067"/>
        <dbReference type="ChEBI" id="CHEBI:16526"/>
        <dbReference type="ChEBI" id="CHEBI:57856"/>
        <dbReference type="ChEBI" id="CHEBI:59789"/>
        <dbReference type="ChEBI" id="CHEBI:70791"/>
        <dbReference type="ChEBI" id="CHEBI:72780"/>
        <dbReference type="EC" id="2.1.1.196"/>
    </reaction>
</comment>
<comment type="pathway">
    <text evidence="1">Cofactor biosynthesis; adenosylcobalamin biosynthesis; cob(II)yrinate a,c-diamide from sirohydrochlorin (anaerobic route): step 8/10.</text>
</comment>
<comment type="subunit">
    <text evidence="2">Homotetramer.</text>
</comment>
<comment type="similarity">
    <text evidence="1">Belongs to the methyltransferase superfamily. Archaeal-type CbiT family.</text>
</comment>
<comment type="caution">
    <text evidence="3">Was originally thought to be a precorrin-8w decarboxylase.</text>
</comment>
<proteinExistence type="evidence at protein level"/>
<evidence type="ECO:0000255" key="1">
    <source>
        <dbReference type="HAMAP-Rule" id="MF_00786"/>
    </source>
</evidence>
<evidence type="ECO:0000269" key="2">
    <source>
    </source>
</evidence>
<evidence type="ECO:0000305" key="3"/>
<evidence type="ECO:0000305" key="4">
    <source>
    </source>
</evidence>
<evidence type="ECO:0007829" key="5">
    <source>
        <dbReference type="PDB" id="1L3I"/>
    </source>
</evidence>
<accession>O26249</accession>
<feature type="chain" id="PRO_0000134941" description="Probable cobalt-precorrin-6B C(15)-methyltransferase (decarboxylating)">
    <location>
        <begin position="1"/>
        <end position="192"/>
    </location>
</feature>
<feature type="binding site" evidence="1 2">
    <location>
        <position position="17"/>
    </location>
    <ligand>
        <name>S-adenosyl-L-methionine</name>
        <dbReference type="ChEBI" id="CHEBI:59789"/>
    </ligand>
</feature>
<feature type="binding site">
    <location>
        <begin position="41"/>
        <end position="45"/>
    </location>
    <ligand>
        <name>S-adenosyl-L-methionine</name>
        <dbReference type="ChEBI" id="CHEBI:59789"/>
    </ligand>
</feature>
<feature type="binding site" evidence="1 2">
    <location>
        <position position="62"/>
    </location>
    <ligand>
        <name>S-adenosyl-L-methionine</name>
        <dbReference type="ChEBI" id="CHEBI:59789"/>
    </ligand>
</feature>
<feature type="binding site" evidence="1 2">
    <location>
        <position position="91"/>
    </location>
    <ligand>
        <name>S-adenosyl-L-methionine</name>
        <dbReference type="ChEBI" id="CHEBI:59789"/>
    </ligand>
</feature>
<feature type="helix" evidence="5">
    <location>
        <begin position="4"/>
        <end position="6"/>
    </location>
</feature>
<feature type="helix" evidence="5">
    <location>
        <begin position="19"/>
        <end position="29"/>
    </location>
</feature>
<feature type="strand" evidence="5">
    <location>
        <begin position="36"/>
        <end position="41"/>
    </location>
</feature>
<feature type="helix" evidence="5">
    <location>
        <begin position="46"/>
        <end position="52"/>
    </location>
</feature>
<feature type="strand" evidence="5">
    <location>
        <begin position="55"/>
        <end position="63"/>
    </location>
</feature>
<feature type="helix" evidence="5">
    <location>
        <begin position="65"/>
        <end position="77"/>
    </location>
</feature>
<feature type="strand" evidence="5">
    <location>
        <begin position="84"/>
        <end position="89"/>
    </location>
</feature>
<feature type="helix" evidence="5">
    <location>
        <begin position="91"/>
        <end position="95"/>
    </location>
</feature>
<feature type="strand" evidence="5">
    <location>
        <begin position="101"/>
        <end position="107"/>
    </location>
</feature>
<feature type="helix" evidence="5">
    <location>
        <begin position="113"/>
        <end position="122"/>
    </location>
</feature>
<feature type="strand" evidence="5">
    <location>
        <begin position="124"/>
        <end position="134"/>
    </location>
</feature>
<feature type="helix" evidence="5">
    <location>
        <begin position="137"/>
        <end position="149"/>
    </location>
</feature>
<feature type="strand" evidence="5">
    <location>
        <begin position="155"/>
        <end position="167"/>
    </location>
</feature>
<feature type="strand" evidence="5">
    <location>
        <begin position="170"/>
        <end position="175"/>
    </location>
</feature>
<feature type="strand" evidence="5">
    <location>
        <begin position="179"/>
        <end position="183"/>
    </location>
</feature>